<proteinExistence type="inferred from homology"/>
<keyword id="KW-0963">Cytoplasm</keyword>
<keyword id="KW-0489">Methyltransferase</keyword>
<keyword id="KW-1185">Reference proteome</keyword>
<keyword id="KW-0694">RNA-binding</keyword>
<keyword id="KW-0698">rRNA processing</keyword>
<keyword id="KW-0949">S-adenosyl-L-methionine</keyword>
<keyword id="KW-0808">Transferase</keyword>
<sequence>MSVRLVLAKGREKSLLRRHPWVFSGAVARMEGKASLGETIDIVDHQGKWLARGAYSPASQIRARVWTFDPSESIDIAFFSRRLQQAQKWRDWLAQKDGLDSYRLIAGESDGLPGITIDRFGNFLVLQLLSAGAEYQRAALISALQTLYPECAIYDRSDVAVRKKEGMELTQGLVTGELPPALLPIEEHGMKLLVDIQHGHKTGYYLDQRDSRLATRRYVENKRVLNCFSYTGGFAVSALMGGCSQVVSVDTSQEALDIARQNVELNKLDLSKAEFVRDDVFKLLRTYRDRGEKFDVIVMDPPKFVENKSQLMGACRGYKDINMLAIQLLNEGGILLTFSCSGLMTSDLFQKIIADAAIDAGRDVQFIEQFRQAADHPVIATYPEGLYLKGFACRVM</sequence>
<feature type="chain" id="PRO_0000366227" description="Ribosomal RNA large subunit methyltransferase I">
    <location>
        <begin position="1"/>
        <end position="396"/>
    </location>
</feature>
<feature type="domain" description="PUA" evidence="1">
    <location>
        <begin position="2"/>
        <end position="81"/>
    </location>
</feature>
<protein>
    <recommendedName>
        <fullName evidence="1">Ribosomal RNA large subunit methyltransferase I</fullName>
        <ecNumber evidence="1">2.1.1.191</ecNumber>
    </recommendedName>
    <alternativeName>
        <fullName evidence="1">23S rRNA m5C1962 methyltransferase</fullName>
    </alternativeName>
    <alternativeName>
        <fullName evidence="1">rRNA (cytosine-C(5)-)-methyltransferase RlmI</fullName>
    </alternativeName>
</protein>
<evidence type="ECO:0000255" key="1">
    <source>
        <dbReference type="HAMAP-Rule" id="MF_01857"/>
    </source>
</evidence>
<reference key="1">
    <citation type="journal article" date="2008" name="J. Bacteriol.">
        <title>The pangenome structure of Escherichia coli: comparative genomic analysis of E. coli commensal and pathogenic isolates.</title>
        <authorList>
            <person name="Rasko D.A."/>
            <person name="Rosovitz M.J."/>
            <person name="Myers G.S.A."/>
            <person name="Mongodin E.F."/>
            <person name="Fricke W.F."/>
            <person name="Gajer P."/>
            <person name="Crabtree J."/>
            <person name="Sebaihia M."/>
            <person name="Thomson N.R."/>
            <person name="Chaudhuri R."/>
            <person name="Henderson I.R."/>
            <person name="Sperandio V."/>
            <person name="Ravel J."/>
        </authorList>
    </citation>
    <scope>NUCLEOTIDE SEQUENCE [LARGE SCALE GENOMIC DNA]</scope>
    <source>
        <strain>E24377A / ETEC</strain>
    </source>
</reference>
<accession>A7ZK71</accession>
<organism>
    <name type="scientific">Escherichia coli O139:H28 (strain E24377A / ETEC)</name>
    <dbReference type="NCBI Taxonomy" id="331111"/>
    <lineage>
        <taxon>Bacteria</taxon>
        <taxon>Pseudomonadati</taxon>
        <taxon>Pseudomonadota</taxon>
        <taxon>Gammaproteobacteria</taxon>
        <taxon>Enterobacterales</taxon>
        <taxon>Enterobacteriaceae</taxon>
        <taxon>Escherichia</taxon>
    </lineage>
</organism>
<dbReference type="EC" id="2.1.1.191" evidence="1"/>
<dbReference type="EMBL" id="CP000800">
    <property type="protein sequence ID" value="ABV17393.1"/>
    <property type="molecule type" value="Genomic_DNA"/>
</dbReference>
<dbReference type="RefSeq" id="WP_000116288.1">
    <property type="nucleotide sequence ID" value="NC_009801.1"/>
</dbReference>
<dbReference type="SMR" id="A7ZK71"/>
<dbReference type="KEGG" id="ecw:EcE24377A_1082"/>
<dbReference type="HOGENOM" id="CLU_014042_0_0_6"/>
<dbReference type="Proteomes" id="UP000001122">
    <property type="component" value="Chromosome"/>
</dbReference>
<dbReference type="GO" id="GO:0005737">
    <property type="term" value="C:cytoplasm"/>
    <property type="evidence" value="ECO:0007669"/>
    <property type="project" value="UniProtKB-SubCell"/>
</dbReference>
<dbReference type="GO" id="GO:0003723">
    <property type="term" value="F:RNA binding"/>
    <property type="evidence" value="ECO:0007669"/>
    <property type="project" value="UniProtKB-KW"/>
</dbReference>
<dbReference type="GO" id="GO:0016434">
    <property type="term" value="F:rRNA (cytosine) methyltransferase activity"/>
    <property type="evidence" value="ECO:0007669"/>
    <property type="project" value="UniProtKB-UniRule"/>
</dbReference>
<dbReference type="CDD" id="cd02440">
    <property type="entry name" value="AdoMet_MTases"/>
    <property type="match status" value="1"/>
</dbReference>
<dbReference type="CDD" id="cd21153">
    <property type="entry name" value="PUA_RlmI"/>
    <property type="match status" value="1"/>
</dbReference>
<dbReference type="CDD" id="cd11572">
    <property type="entry name" value="RlmI_M_like"/>
    <property type="match status" value="1"/>
</dbReference>
<dbReference type="FunFam" id="2.30.130.10:FF:000005">
    <property type="entry name" value="Ribosomal RNA large subunit methyltransferase I"/>
    <property type="match status" value="1"/>
</dbReference>
<dbReference type="FunFam" id="3.30.750.80:FF:000002">
    <property type="entry name" value="Ribosomal RNA large subunit methyltransferase I"/>
    <property type="match status" value="1"/>
</dbReference>
<dbReference type="FunFam" id="3.40.50.150:FF:000044">
    <property type="entry name" value="Ribosomal RNA large subunit methyltransferase I"/>
    <property type="match status" value="1"/>
</dbReference>
<dbReference type="Gene3D" id="2.30.130.10">
    <property type="entry name" value="PUA domain"/>
    <property type="match status" value="1"/>
</dbReference>
<dbReference type="Gene3D" id="3.30.750.80">
    <property type="entry name" value="RNA methyltransferase domain (HRMD) like"/>
    <property type="match status" value="1"/>
</dbReference>
<dbReference type="Gene3D" id="3.40.50.150">
    <property type="entry name" value="Vaccinia Virus protein VP39"/>
    <property type="match status" value="1"/>
</dbReference>
<dbReference type="HAMAP" id="MF_01857">
    <property type="entry name" value="23SrRNA_methyltr_I"/>
    <property type="match status" value="1"/>
</dbReference>
<dbReference type="InterPro" id="IPR002478">
    <property type="entry name" value="PUA"/>
</dbReference>
<dbReference type="InterPro" id="IPR015947">
    <property type="entry name" value="PUA-like_sf"/>
</dbReference>
<dbReference type="InterPro" id="IPR036974">
    <property type="entry name" value="PUA_sf"/>
</dbReference>
<dbReference type="InterPro" id="IPR023542">
    <property type="entry name" value="RLMI"/>
</dbReference>
<dbReference type="InterPro" id="IPR041532">
    <property type="entry name" value="RlmI-like_PUA"/>
</dbReference>
<dbReference type="InterPro" id="IPR019614">
    <property type="entry name" value="SAM-dep_methyl-trfase"/>
</dbReference>
<dbReference type="InterPro" id="IPR029063">
    <property type="entry name" value="SAM-dependent_MTases_sf"/>
</dbReference>
<dbReference type="NCBIfam" id="NF011707">
    <property type="entry name" value="PRK15128.1"/>
    <property type="match status" value="1"/>
</dbReference>
<dbReference type="PANTHER" id="PTHR42873">
    <property type="entry name" value="RIBOSOMAL RNA LARGE SUBUNIT METHYLTRANSFERASE"/>
    <property type="match status" value="1"/>
</dbReference>
<dbReference type="PANTHER" id="PTHR42873:SF1">
    <property type="entry name" value="S-ADENOSYLMETHIONINE-DEPENDENT METHYLTRANSFERASE DOMAIN-CONTAINING PROTEIN"/>
    <property type="match status" value="1"/>
</dbReference>
<dbReference type="Pfam" id="PF10672">
    <property type="entry name" value="Methyltrans_SAM"/>
    <property type="match status" value="1"/>
</dbReference>
<dbReference type="Pfam" id="PF17785">
    <property type="entry name" value="PUA_3"/>
    <property type="match status" value="1"/>
</dbReference>
<dbReference type="SMART" id="SM00359">
    <property type="entry name" value="PUA"/>
    <property type="match status" value="1"/>
</dbReference>
<dbReference type="SUPFAM" id="SSF88697">
    <property type="entry name" value="PUA domain-like"/>
    <property type="match status" value="1"/>
</dbReference>
<dbReference type="SUPFAM" id="SSF53335">
    <property type="entry name" value="S-adenosyl-L-methionine-dependent methyltransferases"/>
    <property type="match status" value="1"/>
</dbReference>
<dbReference type="PROSITE" id="PS50890">
    <property type="entry name" value="PUA"/>
    <property type="match status" value="1"/>
</dbReference>
<gene>
    <name evidence="1" type="primary">rlmI</name>
    <name type="ordered locus">EcE24377A_1082</name>
</gene>
<comment type="function">
    <text evidence="1">Specifically methylates the cytosine at position 1962 (m5C1962) of 23S rRNA.</text>
</comment>
<comment type="catalytic activity">
    <reaction evidence="1">
        <text>cytidine(1962) in 23S rRNA + S-adenosyl-L-methionine = 5-methylcytidine(1962) in 23S rRNA + S-adenosyl-L-homocysteine + H(+)</text>
        <dbReference type="Rhea" id="RHEA:42912"/>
        <dbReference type="Rhea" id="RHEA-COMP:10382"/>
        <dbReference type="Rhea" id="RHEA-COMP:10386"/>
        <dbReference type="ChEBI" id="CHEBI:15378"/>
        <dbReference type="ChEBI" id="CHEBI:57856"/>
        <dbReference type="ChEBI" id="CHEBI:59789"/>
        <dbReference type="ChEBI" id="CHEBI:74483"/>
        <dbReference type="ChEBI" id="CHEBI:82748"/>
        <dbReference type="EC" id="2.1.1.191"/>
    </reaction>
</comment>
<comment type="subcellular location">
    <subcellularLocation>
        <location evidence="1">Cytoplasm</location>
    </subcellularLocation>
</comment>
<comment type="similarity">
    <text evidence="1">Belongs to the methyltransferase superfamily. RlmI family.</text>
</comment>
<name>RLMI_ECO24</name>